<proteinExistence type="evidence at transcript level"/>
<comment type="function">
    <text evidence="5">Catalyzes the formation of S-adenosylmethionine from methionine and ATP. The reaction comprises two steps that are both catalyzed by the same enzyme: formation of S-adenosylmethionine (AdoMet) and triphosphate, and subsequent hydrolysis of the triphosphate.</text>
</comment>
<comment type="catalytic activity">
    <reaction evidence="5">
        <text>L-methionine + ATP + H2O = S-adenosyl-L-methionine + phosphate + diphosphate</text>
        <dbReference type="Rhea" id="RHEA:21080"/>
        <dbReference type="ChEBI" id="CHEBI:15377"/>
        <dbReference type="ChEBI" id="CHEBI:30616"/>
        <dbReference type="ChEBI" id="CHEBI:33019"/>
        <dbReference type="ChEBI" id="CHEBI:43474"/>
        <dbReference type="ChEBI" id="CHEBI:57844"/>
        <dbReference type="ChEBI" id="CHEBI:59789"/>
        <dbReference type="EC" id="2.5.1.6"/>
    </reaction>
</comment>
<comment type="cofactor">
    <cofactor evidence="5">
        <name>Mn(2+)</name>
        <dbReference type="ChEBI" id="CHEBI:29035"/>
    </cofactor>
    <cofactor evidence="5">
        <name>Mg(2+)</name>
        <dbReference type="ChEBI" id="CHEBI:18420"/>
    </cofactor>
    <cofactor evidence="5">
        <name>Co(2+)</name>
        <dbReference type="ChEBI" id="CHEBI:48828"/>
    </cofactor>
    <text evidence="3 5">Binds 2 divalent ions per subunit. The metal ions interact primarily with the substrate (By similarity). Can utilize magnesium, manganese or cobalt (in vitro) (By similarity).</text>
</comment>
<comment type="cofactor">
    <cofactor evidence="5">
        <name>K(+)</name>
        <dbReference type="ChEBI" id="CHEBI:29103"/>
    </cofactor>
    <text evidence="3">Binds 1 potassium ion per subunit. The potassium ion interacts primarily with the substrate (By similarity).</text>
</comment>
<comment type="pathway">
    <text evidence="5">Amino-acid biosynthesis; S-adenosyl-L-methionine biosynthesis; S-adenosyl-L-methionine from L-methionine: step 1/1.</text>
</comment>
<comment type="subunit">
    <text evidence="1">Homotetramer.</text>
</comment>
<comment type="subcellular location">
    <subcellularLocation>
        <location evidence="1">Cytoplasm</location>
    </subcellularLocation>
</comment>
<comment type="tissue specificity">
    <text evidence="6">Mostly expressed in roots. Also present in stems and leaves.</text>
</comment>
<comment type="induction">
    <text evidence="6">Repressed in roots by ABA and mannitol.</text>
</comment>
<comment type="similarity">
    <text evidence="7">Belongs to the AdoMet synthase family.</text>
</comment>
<organism>
    <name type="scientific">Solanum lycopersicum</name>
    <name type="common">Tomato</name>
    <name type="synonym">Lycopersicon esculentum</name>
    <dbReference type="NCBI Taxonomy" id="4081"/>
    <lineage>
        <taxon>Eukaryota</taxon>
        <taxon>Viridiplantae</taxon>
        <taxon>Streptophyta</taxon>
        <taxon>Embryophyta</taxon>
        <taxon>Tracheophyta</taxon>
        <taxon>Spermatophyta</taxon>
        <taxon>Magnoliopsida</taxon>
        <taxon>eudicotyledons</taxon>
        <taxon>Gunneridae</taxon>
        <taxon>Pentapetalae</taxon>
        <taxon>asterids</taxon>
        <taxon>lamiids</taxon>
        <taxon>Solanales</taxon>
        <taxon>Solanaceae</taxon>
        <taxon>Solanoideae</taxon>
        <taxon>Solaneae</taxon>
        <taxon>Solanum</taxon>
        <taxon>Solanum subgen. Lycopersicon</taxon>
    </lineage>
</organism>
<protein>
    <recommendedName>
        <fullName>S-adenosylmethionine synthase 2</fullName>
        <shortName>AdoMet synthase 2</shortName>
        <ecNumber evidence="5">2.5.1.6</ecNumber>
    </recommendedName>
    <alternativeName>
        <fullName>Methionine adenosyltransferase 2</fullName>
        <shortName>MAT 2</shortName>
    </alternativeName>
</protein>
<feature type="chain" id="PRO_0000174465" description="S-adenosylmethionine synthase 2">
    <location>
        <begin position="1"/>
        <end position="393"/>
    </location>
</feature>
<feature type="binding site" evidence="3">
    <location>
        <position position="9"/>
    </location>
    <ligand>
        <name>Mg(2+)</name>
        <dbReference type="ChEBI" id="CHEBI:18420"/>
    </ligand>
</feature>
<feature type="binding site" description="in other chain" evidence="4">
    <location>
        <position position="15"/>
    </location>
    <ligand>
        <name>ATP</name>
        <dbReference type="ChEBI" id="CHEBI:30616"/>
        <note>ligand shared between two neighboring subunits</note>
    </ligand>
</feature>
<feature type="binding site" evidence="2">
    <location>
        <position position="43"/>
    </location>
    <ligand>
        <name>K(+)</name>
        <dbReference type="ChEBI" id="CHEBI:29103"/>
    </ligand>
</feature>
<feature type="binding site" description="in other chain" evidence="2">
    <location>
        <position position="56"/>
    </location>
    <ligand>
        <name>L-methionine</name>
        <dbReference type="ChEBI" id="CHEBI:57844"/>
        <note>ligand shared between two neighboring subunits</note>
    </ligand>
</feature>
<feature type="binding site" description="in other chain" evidence="2">
    <location>
        <position position="99"/>
    </location>
    <ligand>
        <name>L-methionine</name>
        <dbReference type="ChEBI" id="CHEBI:57844"/>
        <note>ligand shared between two neighboring subunits</note>
    </ligand>
</feature>
<feature type="binding site" description="in other chain" evidence="4">
    <location>
        <begin position="167"/>
        <end position="169"/>
    </location>
    <ligand>
        <name>ATP</name>
        <dbReference type="ChEBI" id="CHEBI:30616"/>
        <note>ligand shared between two neighboring subunits</note>
    </ligand>
</feature>
<feature type="binding site" description="in other chain" evidence="4">
    <location>
        <begin position="235"/>
        <end position="238"/>
    </location>
    <ligand>
        <name>ATP</name>
        <dbReference type="ChEBI" id="CHEBI:30616"/>
        <note>ligand shared between two neighboring subunits</note>
    </ligand>
</feature>
<feature type="binding site" description="in other chain" evidence="4">
    <location>
        <position position="246"/>
    </location>
    <ligand>
        <name>ATP</name>
        <dbReference type="ChEBI" id="CHEBI:30616"/>
        <note>ligand shared between two neighboring subunits</note>
    </ligand>
</feature>
<feature type="binding site" evidence="2">
    <location>
        <position position="246"/>
    </location>
    <ligand>
        <name>L-methionine</name>
        <dbReference type="ChEBI" id="CHEBI:57844"/>
        <note>ligand shared between two neighboring subunits</note>
    </ligand>
</feature>
<feature type="binding site" description="in other chain" evidence="2">
    <location>
        <begin position="252"/>
        <end position="253"/>
    </location>
    <ligand>
        <name>ATP</name>
        <dbReference type="ChEBI" id="CHEBI:30616"/>
        <note>ligand shared between two neighboring subunits</note>
    </ligand>
</feature>
<feature type="binding site" evidence="2">
    <location>
        <position position="269"/>
    </location>
    <ligand>
        <name>ATP</name>
        <dbReference type="ChEBI" id="CHEBI:30616"/>
        <note>ligand shared between two neighboring subunits</note>
    </ligand>
</feature>
<feature type="binding site" evidence="2">
    <location>
        <position position="273"/>
    </location>
    <ligand>
        <name>ATP</name>
        <dbReference type="ChEBI" id="CHEBI:30616"/>
        <note>ligand shared between two neighboring subunits</note>
    </ligand>
</feature>
<feature type="binding site" evidence="3">
    <location>
        <position position="277"/>
    </location>
    <ligand>
        <name>ATP</name>
        <dbReference type="ChEBI" id="CHEBI:30616"/>
        <note>ligand shared between two neighboring subunits</note>
    </ligand>
</feature>
<feature type="binding site" description="in other chain" evidence="2">
    <location>
        <position position="277"/>
    </location>
    <ligand>
        <name>L-methionine</name>
        <dbReference type="ChEBI" id="CHEBI:57844"/>
        <note>ligand shared between two neighboring subunits</note>
    </ligand>
</feature>
<accession>P43281</accession>
<keyword id="KW-0067">ATP-binding</keyword>
<keyword id="KW-0170">Cobalt</keyword>
<keyword id="KW-0963">Cytoplasm</keyword>
<keyword id="KW-0460">Magnesium</keyword>
<keyword id="KW-0479">Metal-binding</keyword>
<keyword id="KW-0547">Nucleotide-binding</keyword>
<keyword id="KW-0554">One-carbon metabolism</keyword>
<keyword id="KW-0630">Potassium</keyword>
<keyword id="KW-1185">Reference proteome</keyword>
<keyword id="KW-0808">Transferase</keyword>
<gene>
    <name type="primary">SAM2</name>
</gene>
<evidence type="ECO:0000250" key="1"/>
<evidence type="ECO:0000250" key="2">
    <source>
        <dbReference type="UniProtKB" id="P0A817"/>
    </source>
</evidence>
<evidence type="ECO:0000250" key="3">
    <source>
        <dbReference type="UniProtKB" id="P13444"/>
    </source>
</evidence>
<evidence type="ECO:0000250" key="4">
    <source>
        <dbReference type="UniProtKB" id="Q00266"/>
    </source>
</evidence>
<evidence type="ECO:0000250" key="5">
    <source>
        <dbReference type="UniProtKB" id="Q96551"/>
    </source>
</evidence>
<evidence type="ECO:0000269" key="6">
    <source>
    </source>
</evidence>
<evidence type="ECO:0000305" key="7"/>
<name>METK2_SOLLC</name>
<reference key="1">
    <citation type="journal article" date="1994" name="Plant Mol. Biol.">
        <title>Differential accumulation of S-adenosylmethionine synthetase transcripts in response to salt stress.</title>
        <authorList>
            <person name="Espartero J."/>
            <person name="Pintor-Toro J.A."/>
            <person name="Pardo J.M."/>
        </authorList>
    </citation>
    <scope>NUCLEOTIDE SEQUENCE [GENOMIC DNA]</scope>
    <scope>TISSUE SPECIFICITY</scope>
    <scope>INDUCTION</scope>
    <source>
        <strain>cv. Rutgers</strain>
        <tissue>Seedling</tissue>
    </source>
</reference>
<dbReference type="EC" id="2.5.1.6" evidence="5"/>
<dbReference type="EMBL" id="Z24742">
    <property type="protein sequence ID" value="CAA80866.1"/>
    <property type="molecule type" value="Genomic_DNA"/>
</dbReference>
<dbReference type="PIR" id="S46539">
    <property type="entry name" value="S38875"/>
</dbReference>
<dbReference type="RefSeq" id="NP_001296305.1">
    <property type="nucleotide sequence ID" value="NM_001309376.1"/>
</dbReference>
<dbReference type="SMR" id="P43281"/>
<dbReference type="FunCoup" id="P43281">
    <property type="interactions" value="2654"/>
</dbReference>
<dbReference type="STRING" id="4081.P43281"/>
<dbReference type="PaxDb" id="4081-Solyc12g099000.1.1"/>
<dbReference type="GeneID" id="101247506"/>
<dbReference type="KEGG" id="sly:101247506"/>
<dbReference type="eggNOG" id="KOG1506">
    <property type="taxonomic scope" value="Eukaryota"/>
</dbReference>
<dbReference type="HOGENOM" id="CLU_041802_0_1_1"/>
<dbReference type="InParanoid" id="P43281"/>
<dbReference type="OrthoDB" id="5852090at2759"/>
<dbReference type="PhylomeDB" id="P43281"/>
<dbReference type="UniPathway" id="UPA00315">
    <property type="reaction ID" value="UER00080"/>
</dbReference>
<dbReference type="Proteomes" id="UP000004994">
    <property type="component" value="Unplaced"/>
</dbReference>
<dbReference type="GO" id="GO:0005829">
    <property type="term" value="C:cytosol"/>
    <property type="evidence" value="ECO:0000318"/>
    <property type="project" value="GO_Central"/>
</dbReference>
<dbReference type="GO" id="GO:0005524">
    <property type="term" value="F:ATP binding"/>
    <property type="evidence" value="ECO:0007669"/>
    <property type="project" value="UniProtKB-KW"/>
</dbReference>
<dbReference type="GO" id="GO:0046872">
    <property type="term" value="F:metal ion binding"/>
    <property type="evidence" value="ECO:0007669"/>
    <property type="project" value="UniProtKB-KW"/>
</dbReference>
<dbReference type="GO" id="GO:0004478">
    <property type="term" value="F:methionine adenosyltransferase activity"/>
    <property type="evidence" value="ECO:0000318"/>
    <property type="project" value="GO_Central"/>
</dbReference>
<dbReference type="GO" id="GO:0006730">
    <property type="term" value="P:one-carbon metabolic process"/>
    <property type="evidence" value="ECO:0007669"/>
    <property type="project" value="UniProtKB-KW"/>
</dbReference>
<dbReference type="GO" id="GO:0006556">
    <property type="term" value="P:S-adenosylmethionine biosynthetic process"/>
    <property type="evidence" value="ECO:0000318"/>
    <property type="project" value="GO_Central"/>
</dbReference>
<dbReference type="CDD" id="cd18079">
    <property type="entry name" value="S-AdoMet_synt"/>
    <property type="match status" value="1"/>
</dbReference>
<dbReference type="FunFam" id="3.30.300.10:FF:000001">
    <property type="entry name" value="S-adenosylmethionine synthase"/>
    <property type="match status" value="1"/>
</dbReference>
<dbReference type="FunFam" id="3.30.300.10:FF:000003">
    <property type="entry name" value="S-adenosylmethionine synthase"/>
    <property type="match status" value="1"/>
</dbReference>
<dbReference type="FunFam" id="3.30.300.10:FF:000004">
    <property type="entry name" value="S-adenosylmethionine synthase"/>
    <property type="match status" value="1"/>
</dbReference>
<dbReference type="Gene3D" id="3.30.300.10">
    <property type="match status" value="3"/>
</dbReference>
<dbReference type="HAMAP" id="MF_00086">
    <property type="entry name" value="S_AdoMet_synth1"/>
    <property type="match status" value="1"/>
</dbReference>
<dbReference type="InterPro" id="IPR022631">
    <property type="entry name" value="ADOMET_SYNTHASE_CS"/>
</dbReference>
<dbReference type="InterPro" id="IPR022630">
    <property type="entry name" value="S-AdoMet_synt_C"/>
</dbReference>
<dbReference type="InterPro" id="IPR022629">
    <property type="entry name" value="S-AdoMet_synt_central"/>
</dbReference>
<dbReference type="InterPro" id="IPR022628">
    <property type="entry name" value="S-AdoMet_synt_N"/>
</dbReference>
<dbReference type="InterPro" id="IPR002133">
    <property type="entry name" value="S-AdoMet_synthetase"/>
</dbReference>
<dbReference type="InterPro" id="IPR022636">
    <property type="entry name" value="S-AdoMet_synthetase_sfam"/>
</dbReference>
<dbReference type="NCBIfam" id="TIGR01034">
    <property type="entry name" value="metK"/>
    <property type="match status" value="1"/>
</dbReference>
<dbReference type="PANTHER" id="PTHR11964">
    <property type="entry name" value="S-ADENOSYLMETHIONINE SYNTHETASE"/>
    <property type="match status" value="1"/>
</dbReference>
<dbReference type="Pfam" id="PF02773">
    <property type="entry name" value="S-AdoMet_synt_C"/>
    <property type="match status" value="1"/>
</dbReference>
<dbReference type="Pfam" id="PF02772">
    <property type="entry name" value="S-AdoMet_synt_M"/>
    <property type="match status" value="1"/>
</dbReference>
<dbReference type="Pfam" id="PF00438">
    <property type="entry name" value="S-AdoMet_synt_N"/>
    <property type="match status" value="1"/>
</dbReference>
<dbReference type="PIRSF" id="PIRSF000497">
    <property type="entry name" value="MAT"/>
    <property type="match status" value="1"/>
</dbReference>
<dbReference type="SUPFAM" id="SSF55973">
    <property type="entry name" value="S-adenosylmethionine synthetase"/>
    <property type="match status" value="3"/>
</dbReference>
<dbReference type="PROSITE" id="PS00376">
    <property type="entry name" value="ADOMET_SYNTHASE_1"/>
    <property type="match status" value="1"/>
</dbReference>
<dbReference type="PROSITE" id="PS00377">
    <property type="entry name" value="ADOMET_SYNTHASE_2"/>
    <property type="match status" value="1"/>
</dbReference>
<sequence length="393" mass="43082">METFLFTSESVNEGHPDKLCDQVSDAVLDACLAQDPESKVACETCTKTNLVMVFGEITTKANIDYEKIVRDTCREIGFVSPDVGLDADNCRVLVNIEQQSPDIAQGVHGHLTKRPEEIGAGDQGHMFGYATDETPELMPLSHVLATKLGARLTEVRKNGTCSWLRPDGKTQVTVEYHNDNGAMVPLRVHTVLISTQHDETVTNDEIARDLKEHVIKPVIPEKYLDENTIFHLNPSGRFVIGGPHGDAGLTGRKIIIDTYGGWGAHGGGAFSGKDPTKVDRSGAYIVRQAAKSIVANGLARRCIVQVSYAIGVPEPLSVFVDTYGTGKIPDKEILNIVKENFDFRPGMISINLDLLRGGNGRFLKTAAYGHFGRDDPDFTWEVVKPLKWDKPEA</sequence>